<name>PARP1_CRIGR</name>
<sequence length="1013" mass="112532">MAEASERLYRVEYAKSGRASCKKCSESIPKDSLRMAIMVQSPMFDGKVPHWYHFSCFWKVGHSIRQPDVEVDGFSELRWDDQQKVKKTAEAGGVAGKGQDGSGGKSEKTLGDFAAEYAKSNRSTCKGCMEKIEKGQVRLSKKMLDPEKPQLGMIDRWYHPTCFVKNREELGFRPEYSASQLKGFSLLSAEDKEVLKKQLPGVKSEGKRKGDEVDGADEVAKKKSKKGKDKDSKLEKALKAQNDLIWNIKDELKKACSTSDLKELLIFNQQQVPSGESAILDRVADGMAFGALLPCKECSGQLVFKSDAYYCTGDVTAWTKCMVKTQTPSRKEWVTPKEFREISYLKKLKVKKQDRIFPPETSAPAPPHLPPSVTSAPTAVNSSCPADKPLSNMKILTLGKLSQSKDEAKATIEKLGGKLTGSANNASLCISTKKEVEKMGKKMEEVQAANVRVVCEDFLQDVAASTKSLQELLSAHSLSSWGAEVKVEPVEVAAPKGKSAAPSKKSKGLYKEEGVNKSEKRMKLTLKGGAAVDPDSGLEHSAHVLEKGGKVFSATLGLVDIVKGTNSYYKLQLLEDDKESRYWIFRSWGRVGTVIGSNKLEQMPSKEDAVEHFMKLYEEKTGNAWHSKNFTKYPKKFYPLEIDYGQDEEAVKKLTVKPGTKSKLPKAVQELVGMIFDVESMKKALVEYEIDLQKMPLGKLSKRQIQAAYSILSEVQQAVSQGSSDSQILDLSNRFYTLIPHDFGMKKPPLLNNADSVQAKVEMLDNLLDIEVAYSLLRGGSDDSSKDPIDVNYEKLKTDIKVVDRDSEEAEVIRKYVKNTHATTHNAYDLEVMDIFKIEREGESQRYKPFKQLHNRRLLWHGSRTTNFAGILSQGLRIAPPEAPVTGYMFGKGIYFADMVSKSANYCHTSQGDPIGLILLGEVALGNMYELKHASHISKLPKGKHSVKGLGKTTPDPSASITLEGVEVPLGTGIPSGVNDTCLLYNEYIVYDIAQVNLKYLLKLKFNFKTSLW</sequence>
<proteinExistence type="evidence at transcript level"/>
<feature type="initiator methionine" description="Removed" evidence="1">
    <location>
        <position position="1"/>
    </location>
</feature>
<feature type="chain" id="PRO_0000211319" description="Poly [ADP-ribose] polymerase 1">
    <location>
        <begin position="2"/>
        <end position="1013"/>
    </location>
</feature>
<feature type="chain" id="PRO_0000456359" description="Poly [ADP-ribose] polymerase 1, processed N-terminus" evidence="1">
    <location>
        <begin position="2"/>
        <end position="214"/>
    </location>
</feature>
<feature type="chain" id="PRO_0000456360" description="Poly [ADP-ribose] polymerase 1, processed C-terminus" evidence="1">
    <location>
        <begin position="215"/>
        <end position="1013"/>
    </location>
</feature>
<feature type="domain" description="PADR1 zinc-binding" evidence="11">
    <location>
        <begin position="225"/>
        <end position="359"/>
    </location>
</feature>
<feature type="domain" description="BRCT" evidence="6">
    <location>
        <begin position="385"/>
        <end position="476"/>
    </location>
</feature>
<feature type="domain" description="WGR" evidence="10">
    <location>
        <begin position="541"/>
        <end position="637"/>
    </location>
</feature>
<feature type="domain" description="PARP alpha-helical" evidence="9">
    <location>
        <begin position="661"/>
        <end position="778"/>
    </location>
</feature>
<feature type="domain" description="PARP catalytic" evidence="8">
    <location>
        <begin position="787"/>
        <end position="1013"/>
    </location>
</feature>
<feature type="zinc finger region" description="PARP-type 1" evidence="7">
    <location>
        <begin position="9"/>
        <end position="93"/>
    </location>
</feature>
<feature type="zinc finger region" description="PARP-type 2" evidence="7">
    <location>
        <begin position="113"/>
        <end position="203"/>
    </location>
</feature>
<feature type="region of interest" description="Disordered" evidence="12">
    <location>
        <begin position="198"/>
        <end position="233"/>
    </location>
</feature>
<feature type="region of interest" description="Zinc ribbon" evidence="11">
    <location>
        <begin position="290"/>
        <end position="332"/>
    </location>
</feature>
<feature type="region of interest" description="Disordered" evidence="12">
    <location>
        <begin position="357"/>
        <end position="383"/>
    </location>
</feature>
<feature type="region of interest" description="Automodification domain" evidence="1">
    <location>
        <begin position="373"/>
        <end position="523"/>
    </location>
</feature>
<feature type="region of interest" description="Disordered" evidence="12">
    <location>
        <begin position="495"/>
        <end position="516"/>
    </location>
</feature>
<feature type="short sequence motif" description="Nuclear localization signal" evidence="1">
    <location>
        <begin position="207"/>
        <end position="209"/>
    </location>
</feature>
<feature type="short sequence motif" description="Nuclear localization signal" evidence="1">
    <location>
        <begin position="221"/>
        <end position="226"/>
    </location>
</feature>
<feature type="compositionally biased region" description="Polar residues" evidence="12">
    <location>
        <begin position="372"/>
        <end position="383"/>
    </location>
</feature>
<feature type="active site" description="For poly [ADP-ribose] polymerase activity" evidence="1">
    <location>
        <position position="987"/>
    </location>
</feature>
<feature type="binding site" evidence="7">
    <location>
        <position position="21"/>
    </location>
    <ligand>
        <name>Zn(2+)</name>
        <dbReference type="ChEBI" id="CHEBI:29105"/>
        <label>1</label>
    </ligand>
</feature>
<feature type="binding site" evidence="7">
    <location>
        <position position="24"/>
    </location>
    <ligand>
        <name>Zn(2+)</name>
        <dbReference type="ChEBI" id="CHEBI:29105"/>
        <label>1</label>
    </ligand>
</feature>
<feature type="binding site" evidence="7">
    <location>
        <position position="53"/>
    </location>
    <ligand>
        <name>Zn(2+)</name>
        <dbReference type="ChEBI" id="CHEBI:29105"/>
        <label>1</label>
    </ligand>
</feature>
<feature type="binding site" evidence="7">
    <location>
        <position position="56"/>
    </location>
    <ligand>
        <name>Zn(2+)</name>
        <dbReference type="ChEBI" id="CHEBI:29105"/>
        <label>1</label>
    </ligand>
</feature>
<feature type="binding site" evidence="7">
    <location>
        <position position="125"/>
    </location>
    <ligand>
        <name>Zn(2+)</name>
        <dbReference type="ChEBI" id="CHEBI:29105"/>
        <label>2</label>
    </ligand>
</feature>
<feature type="binding site" evidence="7">
    <location>
        <position position="128"/>
    </location>
    <ligand>
        <name>Zn(2+)</name>
        <dbReference type="ChEBI" id="CHEBI:29105"/>
        <label>2</label>
    </ligand>
</feature>
<feature type="binding site" evidence="7">
    <location>
        <position position="159"/>
    </location>
    <ligand>
        <name>Zn(2+)</name>
        <dbReference type="ChEBI" id="CHEBI:29105"/>
        <label>2</label>
    </ligand>
</feature>
<feature type="binding site" evidence="7">
    <location>
        <position position="162"/>
    </location>
    <ligand>
        <name>Zn(2+)</name>
        <dbReference type="ChEBI" id="CHEBI:29105"/>
        <label>2</label>
    </ligand>
</feature>
<feature type="binding site" evidence="11">
    <location>
        <position position="295"/>
    </location>
    <ligand>
        <name>Zn(2+)</name>
        <dbReference type="ChEBI" id="CHEBI:29105"/>
        <label>3</label>
    </ligand>
</feature>
<feature type="binding site" evidence="11">
    <location>
        <position position="298"/>
    </location>
    <ligand>
        <name>Zn(2+)</name>
        <dbReference type="ChEBI" id="CHEBI:29105"/>
        <label>3</label>
    </ligand>
</feature>
<feature type="binding site" evidence="11">
    <location>
        <position position="311"/>
    </location>
    <ligand>
        <name>Zn(2+)</name>
        <dbReference type="ChEBI" id="CHEBI:29105"/>
        <label>3</label>
    </ligand>
</feature>
<feature type="binding site" evidence="11">
    <location>
        <position position="321"/>
    </location>
    <ligand>
        <name>Zn(2+)</name>
        <dbReference type="ChEBI" id="CHEBI:29105"/>
        <label>3</label>
    </ligand>
</feature>
<feature type="binding site" evidence="4">
    <location>
        <begin position="861"/>
        <end position="863"/>
    </location>
    <ligand>
        <name>NAD(+)</name>
        <dbReference type="ChEBI" id="CHEBI:57540"/>
    </ligand>
</feature>
<feature type="binding site" evidence="4">
    <location>
        <position position="870"/>
    </location>
    <ligand>
        <name>NAD(+)</name>
        <dbReference type="ChEBI" id="CHEBI:57540"/>
    </ligand>
</feature>
<feature type="binding site" evidence="4">
    <location>
        <position position="877"/>
    </location>
    <ligand>
        <name>NAD(+)</name>
        <dbReference type="ChEBI" id="CHEBI:57540"/>
    </ligand>
</feature>
<feature type="binding site" evidence="4">
    <location>
        <position position="903"/>
    </location>
    <ligand>
        <name>NAD(+)</name>
        <dbReference type="ChEBI" id="CHEBI:57540"/>
    </ligand>
</feature>
<feature type="site" description="Cleavage; by caspase-3 and caspase-7" evidence="1">
    <location>
        <begin position="214"/>
        <end position="215"/>
    </location>
</feature>
<feature type="modified residue" description="N-acetylalanine" evidence="1">
    <location>
        <position position="2"/>
    </location>
</feature>
<feature type="modified residue" description="Phosphoserine" evidence="1">
    <location>
        <position position="41"/>
    </location>
</feature>
<feature type="modified residue" description="N6-acetyllysine" evidence="1">
    <location>
        <position position="97"/>
    </location>
</feature>
<feature type="modified residue" description="N6-acetyllysine" evidence="1">
    <location>
        <position position="105"/>
    </location>
</feature>
<feature type="modified residue" description="N6-acetyllysine" evidence="1">
    <location>
        <position position="131"/>
    </location>
</feature>
<feature type="modified residue" description="Phosphoserine" evidence="1">
    <location>
        <position position="177"/>
    </location>
</feature>
<feature type="modified residue" description="Phosphoserine" evidence="1">
    <location>
        <position position="179"/>
    </location>
</feature>
<feature type="modified residue" description="Phosphoserine" evidence="1">
    <location>
        <position position="185"/>
    </location>
</feature>
<feature type="modified residue" description="Phosphoserine" evidence="1">
    <location>
        <position position="274"/>
    </location>
</feature>
<feature type="modified residue" description="Phosphoserine" evidence="1">
    <location>
        <position position="277"/>
    </location>
</feature>
<feature type="modified residue" description="PolyADP-ribosyl aspartic acid" evidence="1">
    <location>
        <position position="387"/>
    </location>
</feature>
<feature type="modified residue" description="PolyADP-ribosyl glutamic acid" evidence="5">
    <location>
        <position position="407"/>
    </location>
</feature>
<feature type="modified residue" description="PolyADP-ribosyl glutamic acid" evidence="5">
    <location>
        <position position="413"/>
    </location>
</feature>
<feature type="modified residue" description="PolyADP-ribosyl glutamic acid" evidence="5">
    <location>
        <position position="435"/>
    </location>
</feature>
<feature type="modified residue" description="PolyADP-ribosyl glutamic acid" evidence="5">
    <location>
        <position position="437"/>
    </location>
</feature>
<feature type="modified residue" description="PolyADP-ribosyl glutamic acid" evidence="5">
    <location>
        <position position="444"/>
    </location>
</feature>
<feature type="modified residue" description="PolyADP-ribosyl glutamic acid" evidence="5">
    <location>
        <position position="445"/>
    </location>
</feature>
<feature type="modified residue" description="PolyADP-ribosyl glutamic acid" evidence="5">
    <location>
        <position position="456"/>
    </location>
</feature>
<feature type="modified residue" description="PolyADP-ribosyl glutamic acid" evidence="5">
    <location>
        <position position="471"/>
    </location>
</feature>
<feature type="modified residue" description="PolyADP-ribosyl glutamic acid" evidence="5">
    <location>
        <position position="484"/>
    </location>
</feature>
<feature type="modified residue" description="PolyADP-ribosyl glutamic acid" evidence="1">
    <location>
        <position position="488"/>
    </location>
</feature>
<feature type="modified residue" description="PolyADP-ribosyl glutamic acid" evidence="1">
    <location>
        <position position="491"/>
    </location>
</feature>
<feature type="modified residue" description="ADP-ribosylserine" evidence="1">
    <location>
        <position position="499"/>
    </location>
</feature>
<feature type="modified residue" description="ADP-ribosylserine" evidence="1">
    <location>
        <position position="503"/>
    </location>
</feature>
<feature type="modified residue" description="ADP-ribosylserine" evidence="1">
    <location>
        <position position="506"/>
    </location>
</feature>
<feature type="modified residue" description="PolyADP-ribosyl glutamic acid" evidence="5">
    <location>
        <position position="512"/>
    </location>
</feature>
<feature type="modified residue" description="PolyADP-ribosyl glutamic acid" evidence="5">
    <location>
        <position position="513"/>
    </location>
</feature>
<feature type="modified residue" description="ADP-ribosylserine" evidence="1">
    <location>
        <position position="518"/>
    </location>
</feature>
<feature type="modified residue" description="PolyADP-ribosyl glutamic acid" evidence="5">
    <location>
        <position position="519"/>
    </location>
</feature>
<feature type="modified residue" description="N6-(ADP-ribosyl)lysine" evidence="1">
    <location>
        <position position="520"/>
    </location>
</feature>
<feature type="modified residue" description="Phosphothreonine" evidence="1">
    <location>
        <position position="593"/>
    </location>
</feature>
<feature type="modified residue" description="N6-acetyllysine" evidence="1">
    <location>
        <position position="599"/>
    </location>
</feature>
<feature type="modified residue" description="N6-acetyllysine" evidence="1">
    <location>
        <position position="620"/>
    </location>
</feature>
<feature type="modified residue" description="Phosphoserine" evidence="1">
    <location>
        <position position="781"/>
    </location>
</feature>
<feature type="modified residue" description="Phosphoserine" evidence="1">
    <location>
        <position position="785"/>
    </location>
</feature>
<feature type="cross-link" description="Glycyl lysine isopeptide (Lys-Gly) (interchain with G-Cter in SUMO2)" evidence="1">
    <location>
        <position position="192"/>
    </location>
</feature>
<feature type="cross-link" description="Glycyl lysine isopeptide (Lys-Gly) (interchain with G-Cter in SUMO1); alternate" evidence="1">
    <location>
        <position position="203"/>
    </location>
</feature>
<feature type="cross-link" description="Glycyl lysine isopeptide (Lys-Gly) (interchain with G-Cter in SUMO2); alternate" evidence="1">
    <location>
        <position position="203"/>
    </location>
</feature>
<feature type="cross-link" description="Glycyl lysine isopeptide (Lys-Gly) (interchain with G-Cter in SUMO2)" evidence="1">
    <location>
        <position position="249"/>
    </location>
</feature>
<feature type="cross-link" description="Glycyl lysine isopeptide (Lys-Gly) (interchain with G-Cter in SUMO2)" evidence="1">
    <location>
        <position position="467"/>
    </location>
</feature>
<feature type="cross-link" description="Glycyl lysine isopeptide (Lys-Gly) (interchain with G-Cter in SUMO1); alternate" evidence="1">
    <location>
        <position position="486"/>
    </location>
</feature>
<feature type="cross-link" description="Glycyl lysine isopeptide (Lys-Gly) (interchain with G-Cter in SUMO2); alternate" evidence="1">
    <location>
        <position position="486"/>
    </location>
</feature>
<feature type="cross-link" description="Glycyl lysine isopeptide (Lys-Gly) (interchain with G-Cter in SUMO2)" evidence="1">
    <location>
        <position position="511"/>
    </location>
</feature>
<feature type="cross-link" description="Glycyl lysine isopeptide (Lys-Gly) (interchain with G-Cter in SUMO2)" evidence="1">
    <location>
        <position position="527"/>
    </location>
</feature>
<feature type="cross-link" description="Glycyl lysine isopeptide (Lys-Gly) (interchain with G-Cter in SUMO1); alternate" evidence="1">
    <location>
        <position position="747"/>
    </location>
</feature>
<feature type="cross-link" description="Glycyl lysine isopeptide (Lys-Gly) (interchain with G-Cter in SUMO2); alternate" evidence="1">
    <location>
        <position position="747"/>
    </location>
</feature>
<reference key="1">
    <citation type="journal article" date="2001" name="Int. J. Radiat. Biol.">
        <title>Suppression of the radiation-sensitive phenotype of hamster irs1 and irs2 strains selected for resistance to 3-aminobenzamide.</title>
        <authorList>
            <person name="Ganesh A."/>
            <person name="Phillips E."/>
            <person name="Thacker J."/>
            <person name="Meuth M."/>
        </authorList>
    </citation>
    <scope>NUCLEOTIDE SEQUENCE [MRNA]</scope>
</reference>
<keyword id="KW-0007">Acetylation</keyword>
<keyword id="KW-0013">ADP-ribosylation</keyword>
<keyword id="KW-0021">Allosteric enzyme</keyword>
<keyword id="KW-0053">Apoptosis</keyword>
<keyword id="KW-0158">Chromosome</keyword>
<keyword id="KW-0963">Cytoplasm</keyword>
<keyword id="KW-0227">DNA damage</keyword>
<keyword id="KW-0234">DNA repair</keyword>
<keyword id="KW-0238">DNA-binding</keyword>
<keyword id="KW-0328">Glycosyltransferase</keyword>
<keyword id="KW-0391">Immunity</keyword>
<keyword id="KW-0399">Innate immunity</keyword>
<keyword id="KW-1017">Isopeptide bond</keyword>
<keyword id="KW-0479">Metal-binding</keyword>
<keyword id="KW-0520">NAD</keyword>
<keyword id="KW-0548">Nucleotidyltransferase</keyword>
<keyword id="KW-0539">Nucleus</keyword>
<keyword id="KW-0597">Phosphoprotein</keyword>
<keyword id="KW-0677">Repeat</keyword>
<keyword id="KW-0804">Transcription</keyword>
<keyword id="KW-0805">Transcription regulation</keyword>
<keyword id="KW-0808">Transferase</keyword>
<keyword id="KW-0832">Ubl conjugation</keyword>
<keyword id="KW-0862">Zinc</keyword>
<keyword id="KW-0863">Zinc-finger</keyword>
<organism>
    <name type="scientific">Cricetulus griseus</name>
    <name type="common">Chinese hamster</name>
    <name type="synonym">Cricetulus barabensis griseus</name>
    <dbReference type="NCBI Taxonomy" id="10029"/>
    <lineage>
        <taxon>Eukaryota</taxon>
        <taxon>Metazoa</taxon>
        <taxon>Chordata</taxon>
        <taxon>Craniata</taxon>
        <taxon>Vertebrata</taxon>
        <taxon>Euteleostomi</taxon>
        <taxon>Mammalia</taxon>
        <taxon>Eutheria</taxon>
        <taxon>Euarchontoglires</taxon>
        <taxon>Glires</taxon>
        <taxon>Rodentia</taxon>
        <taxon>Myomorpha</taxon>
        <taxon>Muroidea</taxon>
        <taxon>Cricetidae</taxon>
        <taxon>Cricetinae</taxon>
        <taxon>Cricetulus</taxon>
    </lineage>
</organism>
<dbReference type="EC" id="2.4.2.30" evidence="1"/>
<dbReference type="EC" id="2.4.2.-" evidence="1"/>
<dbReference type="EMBL" id="AF168781">
    <property type="protein sequence ID" value="AAD45817.1"/>
    <property type="molecule type" value="mRNA"/>
</dbReference>
<dbReference type="RefSeq" id="NP_001233650.1">
    <property type="nucleotide sequence ID" value="NM_001246721.1"/>
</dbReference>
<dbReference type="SMR" id="Q9R152"/>
<dbReference type="ChEMBL" id="CHEMBL2321638"/>
<dbReference type="PaxDb" id="10029-NP_001233650.1"/>
<dbReference type="GeneID" id="100689463"/>
<dbReference type="KEGG" id="cge:100689463"/>
<dbReference type="CTD" id="142"/>
<dbReference type="eggNOG" id="KOG1037">
    <property type="taxonomic scope" value="Eukaryota"/>
</dbReference>
<dbReference type="OrthoDB" id="429950at2759"/>
<dbReference type="PRO" id="PR:Q9R152"/>
<dbReference type="Proteomes" id="UP000694386">
    <property type="component" value="Unplaced"/>
</dbReference>
<dbReference type="Proteomes" id="UP001108280">
    <property type="component" value="Chromosome 5"/>
</dbReference>
<dbReference type="GO" id="GO:0000785">
    <property type="term" value="C:chromatin"/>
    <property type="evidence" value="ECO:0000250"/>
    <property type="project" value="UniProtKB"/>
</dbReference>
<dbReference type="GO" id="GO:0005829">
    <property type="term" value="C:cytosol"/>
    <property type="evidence" value="ECO:0000250"/>
    <property type="project" value="UniProtKB"/>
</dbReference>
<dbReference type="GO" id="GO:0043596">
    <property type="term" value="C:nuclear replication fork"/>
    <property type="evidence" value="ECO:0000250"/>
    <property type="project" value="UniProtKB"/>
</dbReference>
<dbReference type="GO" id="GO:0005730">
    <property type="term" value="C:nucleolus"/>
    <property type="evidence" value="ECO:0007669"/>
    <property type="project" value="UniProtKB-SubCell"/>
</dbReference>
<dbReference type="GO" id="GO:0005634">
    <property type="term" value="C:nucleus"/>
    <property type="evidence" value="ECO:0000250"/>
    <property type="project" value="UniProtKB"/>
</dbReference>
<dbReference type="GO" id="GO:0090734">
    <property type="term" value="C:site of DNA damage"/>
    <property type="evidence" value="ECO:0000250"/>
    <property type="project" value="UniProtKB"/>
</dbReference>
<dbReference type="GO" id="GO:0035861">
    <property type="term" value="C:site of double-strand break"/>
    <property type="evidence" value="ECO:0000250"/>
    <property type="project" value="UniProtKB"/>
</dbReference>
<dbReference type="GO" id="GO:0003684">
    <property type="term" value="F:damaged DNA binding"/>
    <property type="evidence" value="ECO:0000250"/>
    <property type="project" value="UniProtKB"/>
</dbReference>
<dbReference type="GO" id="GO:0051287">
    <property type="term" value="F:NAD binding"/>
    <property type="evidence" value="ECO:0007669"/>
    <property type="project" value="InterPro"/>
</dbReference>
<dbReference type="GO" id="GO:0003950">
    <property type="term" value="F:NAD+ poly-ADP-ribosyltransferase activity"/>
    <property type="evidence" value="ECO:0000250"/>
    <property type="project" value="UniProtKB"/>
</dbReference>
<dbReference type="GO" id="GO:1990404">
    <property type="term" value="F:NAD+-protein mono-ADP-ribosyltransferase activity"/>
    <property type="evidence" value="ECO:0000250"/>
    <property type="project" value="UniProtKB"/>
</dbReference>
<dbReference type="GO" id="GO:0140806">
    <property type="term" value="F:NAD+-protein-aspartate ADP-ribosyltransferase activity"/>
    <property type="evidence" value="ECO:0000250"/>
    <property type="project" value="UniProtKB"/>
</dbReference>
<dbReference type="GO" id="GO:0140807">
    <property type="term" value="F:NAD+-protein-glutamate ADP-ribosyltransferase activity"/>
    <property type="evidence" value="ECO:0000250"/>
    <property type="project" value="UniProtKB"/>
</dbReference>
<dbReference type="GO" id="GO:0140815">
    <property type="term" value="F:NAD+-protein-histidine ADP-ribosyltransferase activity"/>
    <property type="evidence" value="ECO:0000250"/>
    <property type="project" value="UniProtKB"/>
</dbReference>
<dbReference type="GO" id="GO:0140805">
    <property type="term" value="F:NAD+-protein-serine ADP-ribosyltransferase activity"/>
    <property type="evidence" value="ECO:0000250"/>
    <property type="project" value="UniProtKB"/>
</dbReference>
<dbReference type="GO" id="GO:0140808">
    <property type="term" value="F:NAD+-protein-tyrosine ADP-ribosyltransferase activity"/>
    <property type="evidence" value="ECO:0000250"/>
    <property type="project" value="UniProtKB"/>
</dbReference>
<dbReference type="GO" id="GO:0031491">
    <property type="term" value="F:nucleosome binding"/>
    <property type="evidence" value="ECO:0000250"/>
    <property type="project" value="UniProtKB"/>
</dbReference>
<dbReference type="GO" id="GO:0016779">
    <property type="term" value="F:nucleotidyltransferase activity"/>
    <property type="evidence" value="ECO:0007669"/>
    <property type="project" value="UniProtKB-KW"/>
</dbReference>
<dbReference type="GO" id="GO:0042803">
    <property type="term" value="F:protein homodimerization activity"/>
    <property type="evidence" value="ECO:0000250"/>
    <property type="project" value="UniProtKB"/>
</dbReference>
<dbReference type="GO" id="GO:0008270">
    <property type="term" value="F:zinc ion binding"/>
    <property type="evidence" value="ECO:0000250"/>
    <property type="project" value="UniProtKB"/>
</dbReference>
<dbReference type="GO" id="GO:0006915">
    <property type="term" value="P:apoptotic process"/>
    <property type="evidence" value="ECO:0007669"/>
    <property type="project" value="UniProtKB-KW"/>
</dbReference>
<dbReference type="GO" id="GO:1990966">
    <property type="term" value="P:ATP generation from poly-ADP-D-ribose"/>
    <property type="evidence" value="ECO:0000250"/>
    <property type="project" value="UniProtKB"/>
</dbReference>
<dbReference type="GO" id="GO:0046697">
    <property type="term" value="P:decidualization"/>
    <property type="evidence" value="ECO:0000250"/>
    <property type="project" value="UniProtKB"/>
</dbReference>
<dbReference type="GO" id="GO:0030592">
    <property type="term" value="P:DNA ADP-ribosylation"/>
    <property type="evidence" value="ECO:0000250"/>
    <property type="project" value="UniProtKB"/>
</dbReference>
<dbReference type="GO" id="GO:0006974">
    <property type="term" value="P:DNA damage response"/>
    <property type="evidence" value="ECO:0000250"/>
    <property type="project" value="UniProtKB"/>
</dbReference>
<dbReference type="GO" id="GO:0006302">
    <property type="term" value="P:double-strand break repair"/>
    <property type="evidence" value="ECO:0000250"/>
    <property type="project" value="UniProtKB"/>
</dbReference>
<dbReference type="GO" id="GO:0045087">
    <property type="term" value="P:innate immune response"/>
    <property type="evidence" value="ECO:0007669"/>
    <property type="project" value="UniProtKB-KW"/>
</dbReference>
<dbReference type="GO" id="GO:0045824">
    <property type="term" value="P:negative regulation of innate immune response"/>
    <property type="evidence" value="ECO:0000250"/>
    <property type="project" value="UniProtKB"/>
</dbReference>
<dbReference type="GO" id="GO:0000122">
    <property type="term" value="P:negative regulation of transcription by RNA polymerase II"/>
    <property type="evidence" value="ECO:0000250"/>
    <property type="project" value="UniProtKB"/>
</dbReference>
<dbReference type="GO" id="GO:0010613">
    <property type="term" value="P:positive regulation of cardiac muscle hypertrophy"/>
    <property type="evidence" value="ECO:0000250"/>
    <property type="project" value="UniProtKB"/>
</dbReference>
<dbReference type="GO" id="GO:1905168">
    <property type="term" value="P:positive regulation of double-strand break repair via homologous recombination"/>
    <property type="evidence" value="ECO:0000250"/>
    <property type="project" value="UniProtKB"/>
</dbReference>
<dbReference type="GO" id="GO:0060545">
    <property type="term" value="P:positive regulation of necroptotic process"/>
    <property type="evidence" value="ECO:0000250"/>
    <property type="project" value="UniProtKB"/>
</dbReference>
<dbReference type="GO" id="GO:0070213">
    <property type="term" value="P:protein auto-ADP-ribosylation"/>
    <property type="evidence" value="ECO:0000250"/>
    <property type="project" value="UniProtKB"/>
</dbReference>
<dbReference type="GO" id="GO:0070212">
    <property type="term" value="P:protein poly-ADP-ribosylation"/>
    <property type="evidence" value="ECO:0000250"/>
    <property type="project" value="UniProtKB"/>
</dbReference>
<dbReference type="GO" id="GO:0045188">
    <property type="term" value="P:regulation of circadian sleep/wake cycle, non-REM sleep"/>
    <property type="evidence" value="ECO:0000250"/>
    <property type="project" value="UniProtKB"/>
</dbReference>
<dbReference type="GO" id="GO:0071932">
    <property type="term" value="P:replication fork reversal"/>
    <property type="evidence" value="ECO:0000250"/>
    <property type="project" value="UniProtKB"/>
</dbReference>
<dbReference type="CDD" id="cd17747">
    <property type="entry name" value="BRCT_PARP1"/>
    <property type="match status" value="1"/>
</dbReference>
<dbReference type="CDD" id="cd01437">
    <property type="entry name" value="parp_like"/>
    <property type="match status" value="1"/>
</dbReference>
<dbReference type="CDD" id="cd08001">
    <property type="entry name" value="WGR_PARP1_like"/>
    <property type="match status" value="1"/>
</dbReference>
<dbReference type="FunFam" id="1.10.20.130:FF:000001">
    <property type="entry name" value="Poly [ADP-ribose] polymerase"/>
    <property type="match status" value="1"/>
</dbReference>
<dbReference type="FunFam" id="1.20.142.10:FF:000001">
    <property type="entry name" value="Poly [ADP-ribose] polymerase"/>
    <property type="match status" value="1"/>
</dbReference>
<dbReference type="FunFam" id="2.20.25.630:FF:000001">
    <property type="entry name" value="Poly [ADP-ribose] polymerase"/>
    <property type="match status" value="1"/>
</dbReference>
<dbReference type="FunFam" id="3.30.1740.10:FF:000002">
    <property type="entry name" value="Poly [ADP-ribose] polymerase"/>
    <property type="match status" value="1"/>
</dbReference>
<dbReference type="FunFam" id="3.30.1740.10:FF:000003">
    <property type="entry name" value="Poly [ADP-ribose] polymerase"/>
    <property type="match status" value="1"/>
</dbReference>
<dbReference type="FunFam" id="3.40.50.10190:FF:000030">
    <property type="entry name" value="Poly [ADP-ribose] polymerase"/>
    <property type="match status" value="1"/>
</dbReference>
<dbReference type="FunFam" id="3.90.228.10:FF:000002">
    <property type="entry name" value="Poly [ADP-ribose] polymerase"/>
    <property type="match status" value="1"/>
</dbReference>
<dbReference type="Gene3D" id="1.10.20.130">
    <property type="match status" value="1"/>
</dbReference>
<dbReference type="Gene3D" id="2.20.25.630">
    <property type="match status" value="1"/>
</dbReference>
<dbReference type="Gene3D" id="3.90.228.10">
    <property type="match status" value="1"/>
</dbReference>
<dbReference type="Gene3D" id="3.40.50.10190">
    <property type="entry name" value="BRCT domain"/>
    <property type="match status" value="1"/>
</dbReference>
<dbReference type="Gene3D" id="1.20.142.10">
    <property type="entry name" value="Poly(ADP-ribose) polymerase, regulatory domain"/>
    <property type="match status" value="1"/>
</dbReference>
<dbReference type="Gene3D" id="3.30.1740.10">
    <property type="entry name" value="Zinc finger, PARP-type"/>
    <property type="match status" value="2"/>
</dbReference>
<dbReference type="InterPro" id="IPR050800">
    <property type="entry name" value="ARTD/PARP"/>
</dbReference>
<dbReference type="InterPro" id="IPR001357">
    <property type="entry name" value="BRCT_dom"/>
</dbReference>
<dbReference type="InterPro" id="IPR036420">
    <property type="entry name" value="BRCT_dom_sf"/>
</dbReference>
<dbReference type="InterPro" id="IPR038650">
    <property type="entry name" value="PADR1_C_dom_sf"/>
</dbReference>
<dbReference type="InterPro" id="IPR008288">
    <property type="entry name" value="PARP"/>
</dbReference>
<dbReference type="InterPro" id="IPR049296">
    <property type="entry name" value="PARP1-like_PADR1_N"/>
</dbReference>
<dbReference type="InterPro" id="IPR012982">
    <property type="entry name" value="PARP1-like_PADR1_Zn_ribbon"/>
</dbReference>
<dbReference type="InterPro" id="IPR012317">
    <property type="entry name" value="Poly(ADP-ribose)pol_cat_dom"/>
</dbReference>
<dbReference type="InterPro" id="IPR004102">
    <property type="entry name" value="Poly(ADP-ribose)pol_reg_dom"/>
</dbReference>
<dbReference type="InterPro" id="IPR036616">
    <property type="entry name" value="Poly(ADP-ribose)pol_reg_dom_sf"/>
</dbReference>
<dbReference type="InterPro" id="IPR036930">
    <property type="entry name" value="WGR_dom_sf"/>
</dbReference>
<dbReference type="InterPro" id="IPR008893">
    <property type="entry name" value="WGR_domain"/>
</dbReference>
<dbReference type="InterPro" id="IPR001510">
    <property type="entry name" value="Znf_PARP"/>
</dbReference>
<dbReference type="InterPro" id="IPR036957">
    <property type="entry name" value="Znf_PARP_sf"/>
</dbReference>
<dbReference type="PANTHER" id="PTHR10459">
    <property type="entry name" value="DNA LIGASE"/>
    <property type="match status" value="1"/>
</dbReference>
<dbReference type="PANTHER" id="PTHR10459:SF112">
    <property type="entry name" value="POLY [ADP-RIBOSE] POLYMERASE 1"/>
    <property type="match status" value="1"/>
</dbReference>
<dbReference type="Pfam" id="PF00533">
    <property type="entry name" value="BRCT"/>
    <property type="match status" value="1"/>
</dbReference>
<dbReference type="Pfam" id="PF21728">
    <property type="entry name" value="PADR1_N"/>
    <property type="match status" value="1"/>
</dbReference>
<dbReference type="Pfam" id="PF00644">
    <property type="entry name" value="PARP"/>
    <property type="match status" value="1"/>
</dbReference>
<dbReference type="Pfam" id="PF02877">
    <property type="entry name" value="PARP_reg"/>
    <property type="match status" value="1"/>
</dbReference>
<dbReference type="Pfam" id="PF05406">
    <property type="entry name" value="WGR"/>
    <property type="match status" value="1"/>
</dbReference>
<dbReference type="Pfam" id="PF00645">
    <property type="entry name" value="zf-PARP"/>
    <property type="match status" value="2"/>
</dbReference>
<dbReference type="Pfam" id="PF08063">
    <property type="entry name" value="Zn_ribbon_PADR1"/>
    <property type="match status" value="1"/>
</dbReference>
<dbReference type="PIRSF" id="PIRSF000489">
    <property type="entry name" value="NAD_ADPRT"/>
    <property type="match status" value="1"/>
</dbReference>
<dbReference type="SMART" id="SM00292">
    <property type="entry name" value="BRCT"/>
    <property type="match status" value="1"/>
</dbReference>
<dbReference type="SMART" id="SM01335">
    <property type="entry name" value="PADR1"/>
    <property type="match status" value="1"/>
</dbReference>
<dbReference type="SMART" id="SM00773">
    <property type="entry name" value="WGR"/>
    <property type="match status" value="1"/>
</dbReference>
<dbReference type="SMART" id="SM01336">
    <property type="entry name" value="zf-PARP"/>
    <property type="match status" value="2"/>
</dbReference>
<dbReference type="SUPFAM" id="SSF56399">
    <property type="entry name" value="ADP-ribosylation"/>
    <property type="match status" value="1"/>
</dbReference>
<dbReference type="SUPFAM" id="SSF52113">
    <property type="entry name" value="BRCT domain"/>
    <property type="match status" value="1"/>
</dbReference>
<dbReference type="SUPFAM" id="SSF47587">
    <property type="entry name" value="Domain of poly(ADP-ribose) polymerase"/>
    <property type="match status" value="1"/>
</dbReference>
<dbReference type="SUPFAM" id="SSF57716">
    <property type="entry name" value="Glucocorticoid receptor-like (DNA-binding domain)"/>
    <property type="match status" value="2"/>
</dbReference>
<dbReference type="SUPFAM" id="SSF142921">
    <property type="entry name" value="WGR domain-like"/>
    <property type="match status" value="1"/>
</dbReference>
<dbReference type="PROSITE" id="PS50172">
    <property type="entry name" value="BRCT"/>
    <property type="match status" value="1"/>
</dbReference>
<dbReference type="PROSITE" id="PS52007">
    <property type="entry name" value="PADR1"/>
    <property type="match status" value="1"/>
</dbReference>
<dbReference type="PROSITE" id="PS51060">
    <property type="entry name" value="PARP_ALPHA_HD"/>
    <property type="match status" value="1"/>
</dbReference>
<dbReference type="PROSITE" id="PS51059">
    <property type="entry name" value="PARP_CATALYTIC"/>
    <property type="match status" value="1"/>
</dbReference>
<dbReference type="PROSITE" id="PS51977">
    <property type="entry name" value="WGR"/>
    <property type="match status" value="1"/>
</dbReference>
<dbReference type="PROSITE" id="PS00347">
    <property type="entry name" value="ZF_PARP_1"/>
    <property type="match status" value="2"/>
</dbReference>
<dbReference type="PROSITE" id="PS50064">
    <property type="entry name" value="ZF_PARP_2"/>
    <property type="match status" value="2"/>
</dbReference>
<gene>
    <name type="primary">PARP1</name>
    <name type="synonym">ADPRT</name>
</gene>
<comment type="function">
    <text evidence="1 2">Poly-ADP-ribosyltransferase that mediates poly-ADP-ribosylation of proteins and plays a key role in DNA repair (By similarity). Mediates glutamate, aspartate, serine, histidine or tyrosine ADP-ribosylation of proteins: the ADP-D-ribosyl group of NAD(+) is transferred to the acceptor carboxyl group of target residues and further ADP-ribosyl groups are transferred to the 2'-position of the terminal adenosine moiety, building up a polymer with an average chain length of 20-30 units. Serine ADP-ribosylation of proteins constitutes the primary form of ADP-ribosylation of proteins in response to DNA damage (By similarity). Specificity for the different amino acids is conferred by interacting factors, such as HPF1 and NMNAT1 (By similarity). Following interaction with HPF1, catalyzes serine ADP-ribosylation of target proteins; HPF1 confers serine specificity by completing the PARP1 active site. Also catalyzes tyrosine ADP-ribosylation of target proteins following interaction with HPF1 (By similarity). Following interaction with NMNAT1, catalyzes glutamate and aspartate ADP-ribosylation of target proteins; NMNAT1 confers glutamate and aspartate specificity (By similarity). PARP1 initiates the repair of DNA breaks: recognizes and binds DNA breaks within chromatin and recruits HPF1, licensing serine ADP-ribosylation of target proteins, such as histones (H2BS6ADPr and H3S10ADPr), thereby promoting decompaction of chromatin and the recruitment of repair factors leading to the reparation of DNA strand breaks. HPF1 initiates serine ADP-ribosylation but restricts the polymerase activity of PARP1 in order to limit the length of poly-ADP-ribose chains. In addition to base excision repair (BER) pathway, also involved in double-strand breaks (DSBs) repair: together with TIMELESS, accumulates at DNA damage sites and promotes homologous recombination repair by mediating poly-ADP-ribosylation. Mediates the poly-ADP-ribosylation of a number of proteins, including itself, APLF, CHFR and NFAT5. In addition to proteins, also able to ADP-ribosylate DNA: catalyzes ADP-ribosylation of DNA strand break termini containing terminal phosphates and a 2'-OH group in single- and double-stranded DNA, respectively. Required for PARP9 and DTX3L recruitment to DNA damage sites. PARP1-dependent PARP9-DTX3L-mediated ubiquitination promotes the rapid and specific recruitment of 53BP1/TP53BP1, UIMC1/RAP80, and BRCA1 to DNA damage sites (By similarity). PARP1-mediated DNA repair in neurons plays a role in sleep: senses DNA damage in neurons and promotes sleep, facilitating efficient DNA repair. In addition to DNA repair, also involved in other processes, such as transcription regulation, programmed cell death, membrane repair, adipogenesis and innate immunity (By similarity). Acts as a repressor of transcription: binds to nucleosomes and modulates chromatin structure in a manner similar to histone H1, thereby altering RNA polymerase II. Acts both as a positive and negative regulator of transcription elongation, depending on the context. Acts as a positive regulator of transcription elongation by mediating poly-ADP-ribosylation of NELFE, preventing RNA-binding activity of NELFE and relieving transcription pausing. Acts as a negative regulator of transcription elongation in response to DNA damage by catalyzing poly-ADP-ribosylation of CCNT1, disrupting the phase separation activity of CCNT1 and subsequent activation of CDK9. Involved in replication fork progression following interaction with CARM1: mediates poly-ADP-ribosylation at replication forks, slowing fork progression (By similarity). Poly-ADP-ribose chains generated by PARP1 also play a role in poly-ADP-ribose-dependent cell death, a process named parthanatos. Also acts as a negative regulator of the cGAS-STING pathway. Acts by mediating poly-ADP-ribosylation of CGAS: PARP1 translocates into the cytosol following phosphorylation by PRKDC and catalyzes poly-ADP-ribosylation and inactivation of CGAS. Acts as a negative regulator of adipogenesis: catalyzes poly-ADP-ribosylation of histone H2B on 'Glu-35' (H2BE35ADPr) following interaction with NMNAT1, inhibiting phosphorylation of H2B at 'Ser-36' (H2BS36ph), thereby blocking expression of pro-adipogenetic genes (By similarity). Involved in the synthesis of ATP in the nucleus, together with NMNAT1, PARG and NUDT5. Nuclear ATP generation is required for extensive chromatin remodeling events that are energy-consuming (By similarity).</text>
</comment>
<comment type="function">
    <molecule>Poly [ADP-ribose] polymerase 1, processed C-terminus</molecule>
    <text evidence="1">Promotes AIFM1-mediated apoptosis. This form, which translocates into the cytoplasm following cleavage by caspase-3 (CASP3) and caspase-7 (CASP7) in response to apoptosis, is auto-poly-ADP-ribosylated and serves as a poly-ADP-ribose carrier to induce AIFM1-mediated apoptosis.</text>
</comment>
<comment type="function">
    <molecule>Poly [ADP-ribose] polymerase 1, processed N-terminus</molecule>
    <text evidence="1">This cleavage form irreversibly binds to DNA breaks and interferes with DNA repair, promoting DNA damage-induced apoptosis.</text>
</comment>
<comment type="catalytic activity">
    <reaction evidence="1">
        <text>NAD(+) + (ADP-D-ribosyl)n-acceptor = nicotinamide + (ADP-D-ribosyl)n+1-acceptor + H(+).</text>
        <dbReference type="EC" id="2.4.2.30"/>
    </reaction>
</comment>
<comment type="catalytic activity">
    <reaction evidence="1">
        <text>L-seryl-[protein] + NAD(+) = O-(ADP-D-ribosyl)-L-seryl-[protein] + nicotinamide + H(+)</text>
        <dbReference type="Rhea" id="RHEA:58232"/>
        <dbReference type="Rhea" id="RHEA-COMP:9863"/>
        <dbReference type="Rhea" id="RHEA-COMP:15091"/>
        <dbReference type="ChEBI" id="CHEBI:15378"/>
        <dbReference type="ChEBI" id="CHEBI:17154"/>
        <dbReference type="ChEBI" id="CHEBI:29999"/>
        <dbReference type="ChEBI" id="CHEBI:57540"/>
        <dbReference type="ChEBI" id="CHEBI:142556"/>
    </reaction>
    <physiologicalReaction direction="left-to-right" evidence="1">
        <dbReference type="Rhea" id="RHEA:58233"/>
    </physiologicalReaction>
</comment>
<comment type="catalytic activity">
    <reaction evidence="2">
        <text>L-aspartyl-[protein] + NAD(+) = 4-O-(ADP-D-ribosyl)-L-aspartyl-[protein] + nicotinamide</text>
        <dbReference type="Rhea" id="RHEA:54424"/>
        <dbReference type="Rhea" id="RHEA-COMP:9867"/>
        <dbReference type="Rhea" id="RHEA-COMP:13832"/>
        <dbReference type="ChEBI" id="CHEBI:17154"/>
        <dbReference type="ChEBI" id="CHEBI:29961"/>
        <dbReference type="ChEBI" id="CHEBI:57540"/>
        <dbReference type="ChEBI" id="CHEBI:138102"/>
    </reaction>
    <physiologicalReaction direction="left-to-right" evidence="2">
        <dbReference type="Rhea" id="RHEA:54425"/>
    </physiologicalReaction>
</comment>
<comment type="catalytic activity">
    <reaction evidence="2">
        <text>L-glutamyl-[protein] + NAD(+) = 5-O-(ADP-D-ribosyl)-L-glutamyl-[protein] + nicotinamide</text>
        <dbReference type="Rhea" id="RHEA:58224"/>
        <dbReference type="Rhea" id="RHEA-COMP:10208"/>
        <dbReference type="Rhea" id="RHEA-COMP:15089"/>
        <dbReference type="ChEBI" id="CHEBI:17154"/>
        <dbReference type="ChEBI" id="CHEBI:29973"/>
        <dbReference type="ChEBI" id="CHEBI:57540"/>
        <dbReference type="ChEBI" id="CHEBI:142540"/>
    </reaction>
    <physiologicalReaction direction="left-to-right" evidence="2">
        <dbReference type="Rhea" id="RHEA:58225"/>
    </physiologicalReaction>
</comment>
<comment type="catalytic activity">
    <reaction evidence="1">
        <text>L-tyrosyl-[protein] + NAD(+) = O-(ADP-D-ribosyl)-L-tyrosyl-[protein] + nicotinamide + H(+)</text>
        <dbReference type="Rhea" id="RHEA:58236"/>
        <dbReference type="Rhea" id="RHEA-COMP:10136"/>
        <dbReference type="Rhea" id="RHEA-COMP:15092"/>
        <dbReference type="ChEBI" id="CHEBI:15378"/>
        <dbReference type="ChEBI" id="CHEBI:17154"/>
        <dbReference type="ChEBI" id="CHEBI:46858"/>
        <dbReference type="ChEBI" id="CHEBI:57540"/>
        <dbReference type="ChEBI" id="CHEBI:142557"/>
    </reaction>
    <physiologicalReaction direction="left-to-right" evidence="1">
        <dbReference type="Rhea" id="RHEA:58237"/>
    </physiologicalReaction>
</comment>
<comment type="catalytic activity">
    <reaction evidence="1">
        <text>L-histidyl-[protein] + NAD(+) = N(tele)-(ADP-D-ribosyl)-L-histidyl-[protein] + nicotinamide + H(+)</text>
        <dbReference type="Rhea" id="RHEA:72071"/>
        <dbReference type="Rhea" id="RHEA-COMP:9745"/>
        <dbReference type="Rhea" id="RHEA-COMP:18085"/>
        <dbReference type="ChEBI" id="CHEBI:15378"/>
        <dbReference type="ChEBI" id="CHEBI:17154"/>
        <dbReference type="ChEBI" id="CHEBI:29979"/>
        <dbReference type="ChEBI" id="CHEBI:57540"/>
        <dbReference type="ChEBI" id="CHEBI:191398"/>
    </reaction>
    <physiologicalReaction direction="left-to-right" evidence="1">
        <dbReference type="Rhea" id="RHEA:72072"/>
    </physiologicalReaction>
</comment>
<comment type="activity regulation">
    <text evidence="1">ADP-ribosyltransferase activity is regulated via an allosteric activation mechanism. In absence of activation signal, PARP1 is autoinhibited by the PARP alpha-helical domain (also named HD region), which prevents effective NAD(+)-binding. Activity is highly stimulated by signals, such as DNA strand breaks. Binding to damaged DNA unfolds the PARP alpha-helical domain, relieving autoinhibition. Poly-ADP-ribosyltransferase activity is tightly regulated and PARP1 is removed from damaged chromatin following initial poly-ADP-ribosylation of chromatin to avoid prolonged residence (trapping) that has cytotoxic consequences. A number of factors (VCP/p97) or post-translational modifications (auto-poly-ADP-ribosylation or ubiquitination) promote PARP1 removal from chromatin.</text>
</comment>
<comment type="subunit">
    <text evidence="1 2 3">Homodimer; PARP-type zinc-fingers from separate PARP1 molecules form a dimer module that specifically recognizes DNA strand breaks (By similarity). Heterodimer; heterodimerizes with PARP2 (By similarity). Interacts (via the PARP catalytic domain) with HPF1 (By similarity). Interacts with NMNAT1 (By similarity). Interacts with nucleosomes; with a preference for nucleosomes containing H2A.X. Interacts with APTX (By similarity). Component of a base excision repair (BER) complex, containing at least XRCC1, PARP1, PARP2, POLB and LRIG3 (By similarity). Interacts with SRY (By similarity). The SWAP complex consists of NPM1, NCL, PARP1 and SWAP70. Interacts with TIAM2 (By similarity). Interacts with PARP3; leading to activate PARP1 in absence of DNA. Interacts (when poly-ADP-ribosylated) with CHD1L (via macro domain). Interacts with the DNA polymerase alpha catalytic subunit POLA1; this interaction functions as part of the control of replication fork progression. Interacts with EEF1A1 and TXK (By similarity). Interacts with RNF4 (By similarity). Interacts with RNF146 (By similarity). Interacts with ZNF423 (By similarity). Interacts with APLF (By similarity). Interacts with SNAI1 (via zinc fingers); the interaction requires SNAI1 to be poly-ADP-ribosylated and non-phosphorylated (active) by GSK3B (By similarity). Interacts (when poly-ADP-ribosylated) with PARP9 (By similarity). Interacts with NR4A3; activates PARP1 by improving acetylation of PARP1 and suppressing the interaction between PARP1 and SIRT1 (By similarity). Interacts (via catalytic domain) with PUM3; the interaction inhibits the poly-ADP-ribosylation activity of PARP1 and the degradation of PARP1 by CASP3 following genotoxic stress. Interacts with ZNF365. Interacts with RRP1B. Interacts with TIMELESS; the interaction is direct. Interacts with CGAS; leading to impede the formation of the PARP1-TIMELESS complex. Interacts with KHDC3L, the interaction is increased following the formation of DNA double-strand breaks (By similarity). Interacts (when auto-poly-ADP-ribosylated) with XRCC1; leading to inhibit PARP1 ADP-ribosyltransferase activity. Interacts with SPINDOC; promoting PARP1 ADP-ribosyltransferase activity. Interacts with BANF1; leading to inhibit PARP1 ADP-ribosyltransferase activity in response to oxidative DNA damage. Interacts (when sumoylated and ubiquitinated) with VCP/p97; leading to its extraction from chromatin. Interacts with YARS1; promoting PARP1 ADP-ribosyltransferase activity. Interacts with PACMP micropeptide; Interacts with PACMP micropeptide; interaction (By similarity). Interacts (when poly-ADP-ribosylated) with isoform 1 of MACROH2A1; MACROH2A1 specifically binds to poly-ADP-ribose chains and inhibits PARP1 activity, limiting the consumption of nuclear NAD(+) (By similarity). Interacts with CARM1; promoting recruitment to replication forks (By similarity). Interacts with RECQL (By similarity). Interacts with ZNF32; the interaction reshapes ZNF432 interacting proteins (By similarity). Interacts with TPRN; TPRN interacts with a number of DNA damage response proteins, is recruited to sites of DNA damage and may play a role in DNA damage repair (By similarity).</text>
</comment>
<comment type="subunit">
    <molecule>Poly [ADP-ribose] polymerase 1, processed C-terminus</molecule>
    <text evidence="1">Interacts (when auto-poly-ADP-ribosylated) with AIFM1.</text>
</comment>
<comment type="subcellular location">
    <subcellularLocation>
        <location evidence="1">Chromosome</location>
    </subcellularLocation>
    <subcellularLocation>
        <location evidence="1">Nucleus</location>
    </subcellularLocation>
    <subcellularLocation>
        <location evidence="1">Nucleus</location>
        <location evidence="1">Nucleolus</location>
    </subcellularLocation>
    <subcellularLocation>
        <location evidence="1">Cytoplasm</location>
        <location evidence="1">Cytosol</location>
    </subcellularLocation>
    <text evidence="1">Localizes to sites of DNA damage. Recognizes (via PARP-type zinc-fingers) and binds DNA strand breaks. Also binds normal/undamaged chromatin. Auto poly-ADP-ribosylation promotes dissociation from chromatin. Extracted from chromatin by VCP/p97 following sumoylation and ubiquitination. Translocates from the nucleus to the cytosol following phosphorylation by PRKDC. Recruited to replication forks following interaction with CARM1.</text>
</comment>
<comment type="subcellular location">
    <molecule>Poly [ADP-ribose] polymerase 1, processed N-terminus</molecule>
    <subcellularLocation>
        <location evidence="1">Chromosome</location>
    </subcellularLocation>
    <text evidence="1">Following cleavage by caspase-3 (CASP3) and caspase-7 (CASP7) in response to apoptosis, this cleavage form irreversibly binds to DNA breaks.</text>
</comment>
<comment type="subcellular location">
    <molecule>Poly [ADP-ribose] polymerase 1, processed C-terminus</molecule>
    <subcellularLocation>
        <location evidence="1">Cytoplasm</location>
    </subcellularLocation>
    <text evidence="1">Following cleavage by caspase-3 (CASP3) and caspase-7 (CASP7) in response to apoptosis, translocates into the cytoplasm, where the auto-poly-ADP-ribosylated form serves as a poly-ADP-ribose carrier to induce AIFM1-mediated apoptosis.</text>
</comment>
<comment type="domain">
    <text evidence="1">The two PARP-type zinc-fingers (also named Zn1 and Zn2) specifically recognize DNA strand breaks: PARP-type zinc-finger 1 binds PARP-type zinc-finger 2 from a separate PARP1 molecule to form a dimeric module that specifically recognizes DNA strand breaks.</text>
</comment>
<comment type="domain">
    <text evidence="1">The PADR1-type (also named Zn3) zinc-finger mediates an interdomain contact and is required for the ability of PARP1 to regulate chromatin structure.</text>
</comment>
<comment type="domain">
    <text evidence="1">The BRCT domain is able to bind intact DNA without activating the poly-ADP-ribosyltransferase activity. The BRCT domain mediates DNA intrastrand transfer (named 'monkey-bar mechanism') that allows rapid movements of PARP1 through the nucleus.</text>
</comment>
<comment type="domain">
    <text evidence="4">The WGR domain bridges two nucleosomes, with the broken DNA aligned in a position suitable for ligation. The bridging induces structural changes in PARP1 that signal the recognition of a DNA break to the catalytic domain of PARP1, promoting HPF1 recruitment and subsequent activation of PARP1, licensing serine ADP-ribosylation of target proteins.</text>
</comment>
<comment type="domain">
    <text evidence="1">The PARP alpha-helical domain (also named HD region) prevents effective NAD(+)-binding in absence of activation signal. Binding to damaged DNA unfolds the PARP alpha-helical domain, relieving autoinhibition.</text>
</comment>
<comment type="PTM">
    <text evidence="1 2">Poly-ADP-ribosylated on serine, glutamate and aspartate residues by autocatalysis. Auto-ADP-ribosylation on serine takes place following interaction with HPF1. Auto poly-ADP-ribosylation on serine residues promotes its dissociation from chromatin. Poly-ADP-ribosylated by PARP2; poly-ADP-ribosylation mediates the recruitment of CHD1L to DNA damage sites (By similarity). Mono-ADP-ribosylated at Lys-520 by SIRT6 in response to oxidative stress, promoting recruitment to double-strand breaks (DSBs) sites (By similarity).</text>
</comment>
<comment type="PTM">
    <text evidence="2">S-nitrosylated, leading to inhibit transcription regulation activity.</text>
</comment>
<comment type="PTM">
    <text evidence="1">Phosphorylated at Thr-593 by PRKDC in response to DNA damage following virus infection, promoting its translocation to the cytosol. Phosphorylated by TXK.</text>
</comment>
<comment type="PTM">
    <text evidence="1">Proteolytically cleaved by caspase-3 (CASP3) and caspase-7 (CASP7) in response to apoptosis to generate the Poly [ADP-ribose] polymerase 1, processed N-terminus and Poly [ADP-ribose] polymerase 1, processed C-terminus forms.</text>
</comment>
<comment type="PTM">
    <text evidence="1">Sumoylated with SUMO1 or SUMO2 by PIAS4 following prolonged residence (trapping) to chromatin. Sumoylation promotes ubiquitination by RNF4 and removal from chromatin by VCP/p97.</text>
</comment>
<comment type="PTM">
    <text evidence="1">Ubiquitinated by RNF4 following sumoylation by PIAS4 in response to prolonged residence (trapping) to chromatin. Ubiquitination promotes removal from chromatin by VCP/p97.</text>
</comment>
<comment type="similarity">
    <text evidence="11 13">Belongs to the ARTD/PARP family.</text>
</comment>
<accession>Q9R152</accession>
<evidence type="ECO:0000250" key="1">
    <source>
        <dbReference type="UniProtKB" id="P09874"/>
    </source>
</evidence>
<evidence type="ECO:0000250" key="2">
    <source>
        <dbReference type="UniProtKB" id="P11103"/>
    </source>
</evidence>
<evidence type="ECO:0000250" key="3">
    <source>
        <dbReference type="UniProtKB" id="P27008"/>
    </source>
</evidence>
<evidence type="ECO:0000250" key="4">
    <source>
        <dbReference type="UniProtKB" id="Q9UGN5"/>
    </source>
</evidence>
<evidence type="ECO:0000255" key="5"/>
<evidence type="ECO:0000255" key="6">
    <source>
        <dbReference type="PROSITE-ProRule" id="PRU00033"/>
    </source>
</evidence>
<evidence type="ECO:0000255" key="7">
    <source>
        <dbReference type="PROSITE-ProRule" id="PRU00264"/>
    </source>
</evidence>
<evidence type="ECO:0000255" key="8">
    <source>
        <dbReference type="PROSITE-ProRule" id="PRU00397"/>
    </source>
</evidence>
<evidence type="ECO:0000255" key="9">
    <source>
        <dbReference type="PROSITE-ProRule" id="PRU00398"/>
    </source>
</evidence>
<evidence type="ECO:0000255" key="10">
    <source>
        <dbReference type="PROSITE-ProRule" id="PRU01321"/>
    </source>
</evidence>
<evidence type="ECO:0000255" key="11">
    <source>
        <dbReference type="PROSITE-ProRule" id="PRU01351"/>
    </source>
</evidence>
<evidence type="ECO:0000256" key="12">
    <source>
        <dbReference type="SAM" id="MobiDB-lite"/>
    </source>
</evidence>
<evidence type="ECO:0000305" key="13"/>
<protein>
    <recommendedName>
        <fullName>Poly [ADP-ribose] polymerase 1</fullName>
        <shortName>PARP-1</shortName>
        <ecNumber evidence="1">2.4.2.30</ecNumber>
    </recommendedName>
    <alternativeName>
        <fullName>ADP-ribosyltransferase diphtheria toxin-like 1</fullName>
        <shortName>ARTD1</shortName>
    </alternativeName>
    <alternativeName>
        <fullName evidence="1">DNA ADP-ribosyltransferase PARP1</fullName>
        <ecNumber evidence="1">2.4.2.-</ecNumber>
    </alternativeName>
    <alternativeName>
        <fullName>NAD(+) ADP-ribosyltransferase 1</fullName>
        <shortName>ADPRT 1</shortName>
    </alternativeName>
    <alternativeName>
        <fullName>Poly[ADP-ribose] synthase 1</fullName>
    </alternativeName>
    <alternativeName>
        <fullName evidence="1">Protein poly-ADP-ribosyltransferase PARP1</fullName>
        <ecNumber evidence="1">2.4.2.-</ecNumber>
    </alternativeName>
    <component>
        <recommendedName>
            <fullName evidence="1">Poly [ADP-ribose] polymerase 1, processed C-terminus</fullName>
        </recommendedName>
        <alternativeName>
            <fullName evidence="1">Poly [ADP-ribose] polymerase 1, 89-kDa form</fullName>
        </alternativeName>
    </component>
    <component>
        <recommendedName>
            <fullName evidence="1">Poly [ADP-ribose] polymerase 1, processed N-terminus</fullName>
        </recommendedName>
        <alternativeName>
            <fullName evidence="1">Poly [ADP-ribose] polymerase 1, 24-kDa form</fullName>
        </alternativeName>
    </component>
</protein>